<dbReference type="EMBL" id="D87209">
    <property type="protein sequence ID" value="BAA22779.1"/>
    <property type="molecule type" value="mRNA"/>
</dbReference>
<dbReference type="EMBL" id="BC070707">
    <property type="protein sequence ID" value="AAH70707.1"/>
    <property type="molecule type" value="mRNA"/>
</dbReference>
<dbReference type="EMBL" id="X65656">
    <property type="protein sequence ID" value="CAA46607.1"/>
    <property type="molecule type" value="mRNA"/>
</dbReference>
<dbReference type="PIR" id="S22948">
    <property type="entry name" value="S22948"/>
</dbReference>
<dbReference type="RefSeq" id="NP_001084325.1">
    <property type="nucleotide sequence ID" value="NM_001090856.1"/>
</dbReference>
<dbReference type="SMR" id="P40650"/>
<dbReference type="DNASU" id="399440"/>
<dbReference type="GeneID" id="399440"/>
<dbReference type="KEGG" id="xla:399440"/>
<dbReference type="AGR" id="Xenbase:XB-GENE-483422"/>
<dbReference type="CTD" id="399440"/>
<dbReference type="Xenbase" id="XB-GENE-483422">
    <property type="gene designation" value="sox11.S"/>
</dbReference>
<dbReference type="OrthoDB" id="6247875at2759"/>
<dbReference type="Proteomes" id="UP000186698">
    <property type="component" value="Chromosome 5S"/>
</dbReference>
<dbReference type="Bgee" id="399440">
    <property type="expression patterns" value="Expressed in gastrula and 14 other cell types or tissues"/>
</dbReference>
<dbReference type="GO" id="GO:0005634">
    <property type="term" value="C:nucleus"/>
    <property type="evidence" value="ECO:0000318"/>
    <property type="project" value="GO_Central"/>
</dbReference>
<dbReference type="GO" id="GO:0001228">
    <property type="term" value="F:DNA-binding transcription activator activity, RNA polymerase II-specific"/>
    <property type="evidence" value="ECO:0000318"/>
    <property type="project" value="GO_Central"/>
</dbReference>
<dbReference type="GO" id="GO:0000978">
    <property type="term" value="F:RNA polymerase II cis-regulatory region sequence-specific DNA binding"/>
    <property type="evidence" value="ECO:0000318"/>
    <property type="project" value="GO_Central"/>
</dbReference>
<dbReference type="GO" id="GO:0043565">
    <property type="term" value="F:sequence-specific DNA binding"/>
    <property type="evidence" value="ECO:0000314"/>
    <property type="project" value="UniProtKB"/>
</dbReference>
<dbReference type="GO" id="GO:0007420">
    <property type="term" value="P:brain development"/>
    <property type="evidence" value="ECO:0000318"/>
    <property type="project" value="GO_Central"/>
</dbReference>
<dbReference type="GO" id="GO:0048593">
    <property type="term" value="P:camera-type eye morphogenesis"/>
    <property type="evidence" value="ECO:0000318"/>
    <property type="project" value="GO_Central"/>
</dbReference>
<dbReference type="GO" id="GO:0000122">
    <property type="term" value="P:negative regulation of transcription by RNA polymerase II"/>
    <property type="evidence" value="ECO:0000318"/>
    <property type="project" value="GO_Central"/>
</dbReference>
<dbReference type="GO" id="GO:0007399">
    <property type="term" value="P:nervous system development"/>
    <property type="evidence" value="ECO:0000315"/>
    <property type="project" value="UniProtKB"/>
</dbReference>
<dbReference type="GO" id="GO:0030182">
    <property type="term" value="P:neuron differentiation"/>
    <property type="evidence" value="ECO:0000318"/>
    <property type="project" value="GO_Central"/>
</dbReference>
<dbReference type="GO" id="GO:0045944">
    <property type="term" value="P:positive regulation of transcription by RNA polymerase II"/>
    <property type="evidence" value="ECO:0000318"/>
    <property type="project" value="GO_Central"/>
</dbReference>
<dbReference type="CDD" id="cd22029">
    <property type="entry name" value="HMG-box_SoxC"/>
    <property type="match status" value="1"/>
</dbReference>
<dbReference type="FunFam" id="1.10.30.10:FF:000007">
    <property type="entry name" value="Transcription factor SOX"/>
    <property type="match status" value="1"/>
</dbReference>
<dbReference type="Gene3D" id="1.10.30.10">
    <property type="entry name" value="High mobility group box domain"/>
    <property type="match status" value="1"/>
</dbReference>
<dbReference type="InterPro" id="IPR009071">
    <property type="entry name" value="HMG_box_dom"/>
</dbReference>
<dbReference type="InterPro" id="IPR036910">
    <property type="entry name" value="HMG_box_dom_sf"/>
</dbReference>
<dbReference type="InterPro" id="IPR017386">
    <property type="entry name" value="SOX-12/11/4"/>
</dbReference>
<dbReference type="InterPro" id="IPR050140">
    <property type="entry name" value="SRY-related_HMG-box_TF-like"/>
</dbReference>
<dbReference type="PANTHER" id="PTHR10270">
    <property type="entry name" value="SOX TRANSCRIPTION FACTOR"/>
    <property type="match status" value="1"/>
</dbReference>
<dbReference type="PANTHER" id="PTHR10270:SF113">
    <property type="entry name" value="TRANSCRIPTION FACTOR SOX-11"/>
    <property type="match status" value="1"/>
</dbReference>
<dbReference type="Pfam" id="PF00505">
    <property type="entry name" value="HMG_box"/>
    <property type="match status" value="1"/>
</dbReference>
<dbReference type="PIRSF" id="PIRSF038098">
    <property type="entry name" value="SOX-12/11/4a"/>
    <property type="match status" value="1"/>
</dbReference>
<dbReference type="SMART" id="SM00398">
    <property type="entry name" value="HMG"/>
    <property type="match status" value="1"/>
</dbReference>
<dbReference type="SUPFAM" id="SSF47095">
    <property type="entry name" value="HMG-box"/>
    <property type="match status" value="1"/>
</dbReference>
<dbReference type="PROSITE" id="PS50118">
    <property type="entry name" value="HMG_BOX_2"/>
    <property type="match status" value="1"/>
</dbReference>
<proteinExistence type="evidence at protein level"/>
<name>SX11B_XENLA</name>
<comment type="function">
    <text evidence="1 4 6">Transcription factor that binds to the DNA sequence 5'-AACAAT-3' (PubMed:9332350). Acts as a transcriptional activator (By similarity). Plays a role together with nlk in neural induction during early embryogenesis (PubMed:12047350).</text>
</comment>
<comment type="subunit">
    <text evidence="4">Interacts with nlk.2.</text>
</comment>
<comment type="subcellular location">
    <subcellularLocation>
        <location evidence="2">Nucleus</location>
    </subcellularLocation>
</comment>
<comment type="tissue specificity">
    <text evidence="4 6">Expressed in unfertilized eggs but not in early embryos up to stage 13. Localized to the nervous system at the end of neurulation, and restricted to the central nervous system, eye and head neural crest cells by the early tadpole stages. In adults, expressed throughout the ovary, and also in the testis, kidney, brain and small intestine.</text>
</comment>
<comment type="developmental stage">
    <text evidence="6">Expressed both maternally and zygotically.</text>
</comment>
<comment type="induction">
    <text evidence="4">By chrd.</text>
</comment>
<comment type="disruption phenotype">
    <text evidence="5">Morphants show a significant reduction in head area and interpupillary distance compared with controls. Morpholino gene knockdown does not induce an increased death rate.</text>
</comment>
<comment type="caution">
    <text evidence="8">Was originally termed sox-13.</text>
</comment>
<reference key="1">
    <citation type="journal article" date="1997" name="Gene">
        <title>XLS13A and XLS13B: SRY-related genes of Xenopus laevis.</title>
        <authorList>
            <person name="Hiraoka Y."/>
            <person name="Komatsu N."/>
            <person name="Sakai Y."/>
            <person name="Ogawa M."/>
            <person name="Shiozawa M."/>
            <person name="Aiso S."/>
        </authorList>
    </citation>
    <scope>NUCLEOTIDE SEQUENCE [MRNA]</scope>
    <scope>FUNCTION</scope>
    <scope>TISSUE SPECIFICITY</scope>
    <scope>DEVELOPMENTAL STAGE</scope>
    <source>
        <tissue>Ovary</tissue>
    </source>
</reference>
<reference key="2">
    <citation type="submission" date="2004-05" db="EMBL/GenBank/DDBJ databases">
        <authorList>
            <consortium name="NIH - Xenopus Gene Collection (XGC) project"/>
        </authorList>
    </citation>
    <scope>NUCLEOTIDE SEQUENCE [LARGE SCALE MRNA]</scope>
    <source>
        <tissue>Oocyte</tissue>
    </source>
</reference>
<reference key="3">
    <citation type="journal article" date="1992" name="Nucleic Acids Res.">
        <title>A conserved family of genes related to the testis determining gene, SRY.</title>
        <authorList>
            <person name="Denny P."/>
            <person name="Swift S."/>
            <person name="Brand N."/>
            <person name="Dabhade N."/>
            <person name="Barton P."/>
            <person name="Ashworth A."/>
        </authorList>
    </citation>
    <scope>NUCLEOTIDE SEQUENCE [MRNA] OF 56-109</scope>
    <source>
        <tissue>Oocyte</tissue>
    </source>
</reference>
<reference key="4">
    <citation type="journal article" date="2002" name="Genes Cells">
        <title>Involvement of NLK and Sox11 in neural induction in Xenopus development.</title>
        <authorList>
            <person name="Hyodo-Miura J."/>
            <person name="Urushiyama S."/>
            <person name="Nagai S."/>
            <person name="Nishita M."/>
            <person name="Ueno N."/>
            <person name="Shibuya H."/>
        </authorList>
    </citation>
    <scope>FUNCTION</scope>
    <scope>INTERACTION WITH NLK.2</scope>
    <scope>TISSUE SPECIFICITY</scope>
    <scope>INDUCTION</scope>
</reference>
<reference key="5">
    <citation type="journal article" date="2016" name="J. Med. Genet.">
        <title>Deletions and de novo mutations of SOX11 are associated with a neurodevelopmental disorder with features of Coffin-Siris syndrome.</title>
        <authorList>
            <consortium name="DDD Collaboration"/>
            <person name="Hempel A."/>
            <person name="Pagnamenta A.T."/>
            <person name="Blyth M."/>
            <person name="Mansour S."/>
            <person name="McConnell V."/>
            <person name="Kou I."/>
            <person name="Ikegawa S."/>
            <person name="Tsurusaki Y."/>
            <person name="Matsumoto N."/>
            <person name="Lo-Castro A."/>
            <person name="Plessis G."/>
            <person name="Albrecht B."/>
            <person name="Battaglia A."/>
            <person name="Taylor J.C."/>
            <person name="Howard M.F."/>
            <person name="Keays D."/>
            <person name="Sohal A.S."/>
            <person name="Kuehl S.J."/>
            <person name="Kini U."/>
            <person name="McNeill A."/>
        </authorList>
    </citation>
    <scope>DISRUPTION PHENOTYPE</scope>
</reference>
<keyword id="KW-0010">Activator</keyword>
<keyword id="KW-0217">Developmental protein</keyword>
<keyword id="KW-0221">Differentiation</keyword>
<keyword id="KW-0238">DNA-binding</keyword>
<keyword id="KW-0524">Neurogenesis</keyword>
<keyword id="KW-0539">Nucleus</keyword>
<keyword id="KW-1185">Reference proteome</keyword>
<keyword id="KW-0804">Transcription</keyword>
<keyword id="KW-0805">Transcription regulation</keyword>
<feature type="chain" id="PRO_0000048778" description="Transcription factor Sox-11-B">
    <location>
        <begin position="1"/>
        <end position="374"/>
    </location>
</feature>
<feature type="DNA-binding region" description="HMG box" evidence="2">
    <location>
        <begin position="45"/>
        <end position="113"/>
    </location>
</feature>
<feature type="region of interest" description="Disordered" evidence="3">
    <location>
        <begin position="1"/>
        <end position="22"/>
    </location>
</feature>
<feature type="region of interest" description="Disordered" evidence="3">
    <location>
        <begin position="112"/>
        <end position="165"/>
    </location>
</feature>
<feature type="compositionally biased region" description="Basic and acidic residues" evidence="3">
    <location>
        <begin position="1"/>
        <end position="15"/>
    </location>
</feature>
<feature type="compositionally biased region" description="Polar residues" evidence="3">
    <location>
        <begin position="126"/>
        <end position="137"/>
    </location>
</feature>
<feature type="compositionally biased region" description="Basic residues" evidence="3">
    <location>
        <begin position="144"/>
        <end position="154"/>
    </location>
</feature>
<feature type="compositionally biased region" description="Low complexity" evidence="3">
    <location>
        <begin position="155"/>
        <end position="165"/>
    </location>
</feature>
<feature type="sequence conflict" description="In Ref. 1; BAA22779." evidence="7" ref="1">
    <original>D</original>
    <variation>DE</variation>
    <location>
        <position position="199"/>
    </location>
</feature>
<evidence type="ECO:0000250" key="1">
    <source>
        <dbReference type="UniProtKB" id="Q7M6Y2"/>
    </source>
</evidence>
<evidence type="ECO:0000255" key="2">
    <source>
        <dbReference type="PROSITE-ProRule" id="PRU00267"/>
    </source>
</evidence>
<evidence type="ECO:0000256" key="3">
    <source>
        <dbReference type="SAM" id="MobiDB-lite"/>
    </source>
</evidence>
<evidence type="ECO:0000269" key="4">
    <source>
    </source>
</evidence>
<evidence type="ECO:0000269" key="5">
    <source>
    </source>
</evidence>
<evidence type="ECO:0000269" key="6">
    <source>
    </source>
</evidence>
<evidence type="ECO:0000305" key="7"/>
<evidence type="ECO:0000305" key="8">
    <source>
    </source>
</evidence>
<accession>P40650</accession>
<accession>Q6NRN8</accession>
<accession>Q9PSW7</accession>
<protein>
    <recommendedName>
        <fullName>Transcription factor Sox-11-B</fullName>
    </recommendedName>
    <alternativeName>
        <fullName>Transcription factor Sox-13</fullName>
        <shortName>xSox-13</shortName>
    </alternativeName>
    <alternativeName>
        <fullName>XLS13B</fullName>
    </alternativeName>
</protein>
<gene>
    <name type="primary">sox11-b</name>
    <name type="synonym">sox11</name>
    <name type="synonym">sox13</name>
</gene>
<sequence length="374" mass="41964">MVQRADMDSSQHTEPDTEEGEFMACSPAALDESDPDWCKTATGHIKRPMNAFMVWSKIERRKIMEQSPDMHNAEISKRLGKRWKMLNDSEKIPFIREAERLRLKHMADYPDYKYRPRKKPKVDPTASKSPTLAQSPEKSPKSRSAGKKCPKLKPSHSGNSSKSLSIKSEYGVGGDYVFGSPKSSGKAAVMKCVFMDEDDEEEEEDEEEEEDELQIRIKQEEDDESLRLYNVAKVPASPTLSSSSAESVEGASMYEDIRNGTRLYYNFKNITKQSTIPQATITLAPRPLLATTSPAGSHELLFDLSLNFTQQNPQLPDPNSGNVSLSLVDKDLDSCSEGSLGSHFDFPDYCTPELSEMIAGDWLEANFSDLVFTY</sequence>
<organism>
    <name type="scientific">Xenopus laevis</name>
    <name type="common">African clawed frog</name>
    <dbReference type="NCBI Taxonomy" id="8355"/>
    <lineage>
        <taxon>Eukaryota</taxon>
        <taxon>Metazoa</taxon>
        <taxon>Chordata</taxon>
        <taxon>Craniata</taxon>
        <taxon>Vertebrata</taxon>
        <taxon>Euteleostomi</taxon>
        <taxon>Amphibia</taxon>
        <taxon>Batrachia</taxon>
        <taxon>Anura</taxon>
        <taxon>Pipoidea</taxon>
        <taxon>Pipidae</taxon>
        <taxon>Xenopodinae</taxon>
        <taxon>Xenopus</taxon>
        <taxon>Xenopus</taxon>
    </lineage>
</organism>